<comment type="function">
    <text evidence="1">Catalyzes the radical-mediated synthesis of 7,8-didemethyl-8-hydroxy-5-deazariboflavin from 5-amino-5-(4-hydroxybenzyl)-6-(D-ribitylimino)-5,6-dihydrouracil.</text>
</comment>
<comment type="catalytic activity">
    <reaction evidence="1">
        <text>5-amino-5-(4-hydroxybenzyl)-6-(D-ribitylimino)-5,6-dihydrouracil + S-adenosyl-L-methionine = 7,8-didemethyl-8-hydroxy-5-deazariboflavin + 5'-deoxyadenosine + L-methionine + NH4(+) + H(+)</text>
        <dbReference type="Rhea" id="RHEA:55204"/>
        <dbReference type="ChEBI" id="CHEBI:15378"/>
        <dbReference type="ChEBI" id="CHEBI:17319"/>
        <dbReference type="ChEBI" id="CHEBI:28938"/>
        <dbReference type="ChEBI" id="CHEBI:57844"/>
        <dbReference type="ChEBI" id="CHEBI:59789"/>
        <dbReference type="ChEBI" id="CHEBI:59904"/>
        <dbReference type="ChEBI" id="CHEBI:85936"/>
        <dbReference type="EC" id="4.3.1.32"/>
    </reaction>
</comment>
<comment type="cofactor">
    <cofactor evidence="1">
        <name>[4Fe-4S] cluster</name>
        <dbReference type="ChEBI" id="CHEBI:49883"/>
    </cofactor>
    <text evidence="1">Binds 1 [4Fe-4S] cluster. The cluster is coordinated with 3 cysteines and an exchangeable S-adenosyl-L-methionine.</text>
</comment>
<comment type="pathway">
    <text evidence="1">Cofactor biosynthesis; coenzyme F0 biosynthesis.</text>
</comment>
<comment type="subunit">
    <text evidence="1">Consists of two subunits, CofG and CofH.</text>
</comment>
<comment type="similarity">
    <text evidence="1">Belongs to the radical SAM superfamily. CofG family.</text>
</comment>
<comment type="sequence caution" evidence="3">
    <conflict type="erroneous initiation">
        <sequence resource="EMBL-CDS" id="ABQ87240"/>
    </conflict>
</comment>
<proteinExistence type="inferred from homology"/>
<reference key="1">
    <citation type="journal article" date="2007" name="Proc. Natl. Acad. Sci. U.S.A.">
        <title>Genomic and metabolic adaptations of Methanobrevibacter smithii to the human gut.</title>
        <authorList>
            <person name="Samuel B.S."/>
            <person name="Hansen E.E."/>
            <person name="Manchester J.K."/>
            <person name="Coutinho P.M."/>
            <person name="Henrissat B."/>
            <person name="Fulton R."/>
            <person name="Latreille P."/>
            <person name="Kim K."/>
            <person name="Wilson R.K."/>
            <person name="Gordon J.I."/>
        </authorList>
    </citation>
    <scope>NUCLEOTIDE SEQUENCE [LARGE SCALE GENOMIC DNA]</scope>
    <source>
        <strain>ATCC 35061 / DSM 861 / OCM 144 / PS</strain>
    </source>
</reference>
<protein>
    <recommendedName>
        <fullName evidence="1">7,8-didemethyl-8-hydroxy-5-deazariboflavin synthase</fullName>
        <ecNumber evidence="1">4.3.1.32</ecNumber>
    </recommendedName>
    <alternativeName>
        <fullName evidence="1">FO synthase subunit 1</fullName>
    </alternativeName>
</protein>
<gene>
    <name evidence="1" type="primary">cofG</name>
    <name type="ordered locus">Msm_1035</name>
</gene>
<evidence type="ECO:0000255" key="1">
    <source>
        <dbReference type="HAMAP-Rule" id="MF_01611"/>
    </source>
</evidence>
<evidence type="ECO:0000255" key="2">
    <source>
        <dbReference type="PROSITE-ProRule" id="PRU01266"/>
    </source>
</evidence>
<evidence type="ECO:0000305" key="3"/>
<dbReference type="EC" id="4.3.1.32" evidence="1"/>
<dbReference type="EMBL" id="CP000678">
    <property type="protein sequence ID" value="ABQ87240.1"/>
    <property type="status" value="ALT_INIT"/>
    <property type="molecule type" value="Genomic_DNA"/>
</dbReference>
<dbReference type="SMR" id="A5UM12"/>
<dbReference type="STRING" id="420247.Msm_1035"/>
<dbReference type="EnsemblBacteria" id="ABQ87240">
    <property type="protein sequence ID" value="ABQ87240"/>
    <property type="gene ID" value="Msm_1035"/>
</dbReference>
<dbReference type="KEGG" id="msi:Msm_1035"/>
<dbReference type="PATRIC" id="fig|420247.28.peg.1033"/>
<dbReference type="eggNOG" id="arCOG00657">
    <property type="taxonomic scope" value="Archaea"/>
</dbReference>
<dbReference type="HOGENOM" id="CLU_054174_0_0_2"/>
<dbReference type="UniPathway" id="UPA00072"/>
<dbReference type="Proteomes" id="UP000001992">
    <property type="component" value="Chromosome"/>
</dbReference>
<dbReference type="GO" id="GO:0051539">
    <property type="term" value="F:4 iron, 4 sulfur cluster binding"/>
    <property type="evidence" value="ECO:0007669"/>
    <property type="project" value="UniProtKB-KW"/>
</dbReference>
<dbReference type="GO" id="GO:0044689">
    <property type="term" value="F:7,8-didemethyl-8-hydroxy-5-deazariboflavin synthase activity"/>
    <property type="evidence" value="ECO:0007669"/>
    <property type="project" value="UniProtKB-EC"/>
</dbReference>
<dbReference type="GO" id="GO:0005506">
    <property type="term" value="F:iron ion binding"/>
    <property type="evidence" value="ECO:0007669"/>
    <property type="project" value="UniProtKB-UniRule"/>
</dbReference>
<dbReference type="GO" id="GO:0016765">
    <property type="term" value="F:transferase activity, transferring alkyl or aryl (other than methyl) groups"/>
    <property type="evidence" value="ECO:0007669"/>
    <property type="project" value="InterPro"/>
</dbReference>
<dbReference type="CDD" id="cd01335">
    <property type="entry name" value="Radical_SAM"/>
    <property type="match status" value="1"/>
</dbReference>
<dbReference type="Gene3D" id="3.20.20.70">
    <property type="entry name" value="Aldolase class I"/>
    <property type="match status" value="1"/>
</dbReference>
<dbReference type="HAMAP" id="MF_01611">
    <property type="entry name" value="FO_synth_sub1"/>
    <property type="match status" value="1"/>
</dbReference>
<dbReference type="InterPro" id="IPR013785">
    <property type="entry name" value="Aldolase_TIM"/>
</dbReference>
<dbReference type="InterPro" id="IPR019939">
    <property type="entry name" value="CofG_family"/>
</dbReference>
<dbReference type="InterPro" id="IPR006638">
    <property type="entry name" value="Elp3/MiaA/NifB-like_rSAM"/>
</dbReference>
<dbReference type="InterPro" id="IPR034405">
    <property type="entry name" value="F420"/>
</dbReference>
<dbReference type="InterPro" id="IPR007197">
    <property type="entry name" value="rSAM"/>
</dbReference>
<dbReference type="NCBIfam" id="TIGR03550">
    <property type="entry name" value="F420_cofG"/>
    <property type="match status" value="1"/>
</dbReference>
<dbReference type="NCBIfam" id="NF004884">
    <property type="entry name" value="PRK06245.1"/>
    <property type="match status" value="1"/>
</dbReference>
<dbReference type="PANTHER" id="PTHR43076:SF15">
    <property type="entry name" value="7,8-DIDEMETHYL-8-HYDROXY-5-DEAZARIBOFLAVIN SYNTHASE"/>
    <property type="match status" value="1"/>
</dbReference>
<dbReference type="PANTHER" id="PTHR43076">
    <property type="entry name" value="FO SYNTHASE (COFH)"/>
    <property type="match status" value="1"/>
</dbReference>
<dbReference type="Pfam" id="PF04055">
    <property type="entry name" value="Radical_SAM"/>
    <property type="match status" value="1"/>
</dbReference>
<dbReference type="SFLD" id="SFLDF00294">
    <property type="entry name" value="7_8-didemethyl-8-hydroxy-5-dea"/>
    <property type="match status" value="1"/>
</dbReference>
<dbReference type="SFLD" id="SFLDS00029">
    <property type="entry name" value="Radical_SAM"/>
    <property type="match status" value="1"/>
</dbReference>
<dbReference type="SMART" id="SM00729">
    <property type="entry name" value="Elp3"/>
    <property type="match status" value="1"/>
</dbReference>
<dbReference type="SUPFAM" id="SSF102114">
    <property type="entry name" value="Radical SAM enzymes"/>
    <property type="match status" value="1"/>
</dbReference>
<dbReference type="PROSITE" id="PS51918">
    <property type="entry name" value="RADICAL_SAM"/>
    <property type="match status" value="1"/>
</dbReference>
<sequence length="339" mass="38258">MNKASKYRENNLITYSKNIFIPLTEICKNDCGYCNFKKTPDDPSAIILKTKEEVLASLKEAERYGCSEALFTFGEDADEEESVQQKLAEFGYENIVDYVFDICKMTLEETSLLPHTNGGNFSYESLKKLKEVNASMGMMLESTSVRLMNTVAHNKSPGKNPEIRLKTISNAGKLKIPYTTGILIGIGETKEEIADSLLAIRDLYDKYGHIQEVIIQNFTTSPGIEMENWEEPTFLDMVRTVIAGKLLFRDTDVSIQVPPNLNHDTAQIFLLCGADDWGGVSPVSPDYVNPTSPWPTLDELNRLTQDAGFELIERMCVYEKYVNDKWLNETLLEKIANLS</sequence>
<accession>A5UM12</accession>
<name>COFG_METS3</name>
<feature type="chain" id="PRO_0000335561" description="7,8-didemethyl-8-hydroxy-5-deazariboflavin synthase">
    <location>
        <begin position="1"/>
        <end position="339"/>
    </location>
</feature>
<feature type="domain" description="Radical SAM core" evidence="2">
    <location>
        <begin position="13"/>
        <end position="258"/>
    </location>
</feature>
<feature type="binding site" evidence="1">
    <location>
        <position position="27"/>
    </location>
    <ligand>
        <name>[4Fe-4S] cluster</name>
        <dbReference type="ChEBI" id="CHEBI:49883"/>
        <note>4Fe-4S-S-AdoMet</note>
    </ligand>
</feature>
<feature type="binding site" evidence="1">
    <location>
        <position position="31"/>
    </location>
    <ligand>
        <name>[4Fe-4S] cluster</name>
        <dbReference type="ChEBI" id="CHEBI:49883"/>
        <note>4Fe-4S-S-AdoMet</note>
    </ligand>
</feature>
<feature type="binding site" evidence="1">
    <location>
        <position position="34"/>
    </location>
    <ligand>
        <name>[4Fe-4S] cluster</name>
        <dbReference type="ChEBI" id="CHEBI:49883"/>
        <note>4Fe-4S-S-AdoMet</note>
    </ligand>
</feature>
<organism>
    <name type="scientific">Methanobrevibacter smithii (strain ATCC 35061 / DSM 861 / OCM 144 / PS)</name>
    <dbReference type="NCBI Taxonomy" id="420247"/>
    <lineage>
        <taxon>Archaea</taxon>
        <taxon>Methanobacteriati</taxon>
        <taxon>Methanobacteriota</taxon>
        <taxon>Methanomada group</taxon>
        <taxon>Methanobacteria</taxon>
        <taxon>Methanobacteriales</taxon>
        <taxon>Methanobacteriaceae</taxon>
        <taxon>Methanobrevibacter</taxon>
    </lineage>
</organism>
<keyword id="KW-0004">4Fe-4S</keyword>
<keyword id="KW-0408">Iron</keyword>
<keyword id="KW-0411">Iron-sulfur</keyword>
<keyword id="KW-0456">Lyase</keyword>
<keyword id="KW-0479">Metal-binding</keyword>
<keyword id="KW-0949">S-adenosyl-L-methionine</keyword>